<organism>
    <name type="scientific">Yersinia enterocolitica serotype O:8 / biotype 1B (strain NCTC 13174 / 8081)</name>
    <dbReference type="NCBI Taxonomy" id="393305"/>
    <lineage>
        <taxon>Bacteria</taxon>
        <taxon>Pseudomonadati</taxon>
        <taxon>Pseudomonadota</taxon>
        <taxon>Gammaproteobacteria</taxon>
        <taxon>Enterobacterales</taxon>
        <taxon>Yersiniaceae</taxon>
        <taxon>Yersinia</taxon>
    </lineage>
</organism>
<evidence type="ECO:0000255" key="1">
    <source>
        <dbReference type="HAMAP-Rule" id="MF_00530"/>
    </source>
</evidence>
<sequence length="140" mass="15163">MAAMTYHLDVVSAEKKMFSGVVQKIQVTGSEGELGIFPGHAPLLTAIKPGMIRIVKQFGEEEFIYLSGGILEVQPSVVIVLADTAIRGTDLDEAKALESKRKAEEHINNSHGDVDYAQASAELAKAIAKLRVIELTRKAM</sequence>
<name>ATPE_YERE8</name>
<proteinExistence type="inferred from homology"/>
<gene>
    <name evidence="1" type="primary">atpC</name>
    <name type="ordered locus">YE4205</name>
</gene>
<accession>A1JTC5</accession>
<feature type="chain" id="PRO_1000056551" description="ATP synthase epsilon chain">
    <location>
        <begin position="1"/>
        <end position="140"/>
    </location>
</feature>
<reference key="1">
    <citation type="journal article" date="2006" name="PLoS Genet.">
        <title>The complete genome sequence and comparative genome analysis of the high pathogenicity Yersinia enterocolitica strain 8081.</title>
        <authorList>
            <person name="Thomson N.R."/>
            <person name="Howard S."/>
            <person name="Wren B.W."/>
            <person name="Holden M.T.G."/>
            <person name="Crossman L."/>
            <person name="Challis G.L."/>
            <person name="Churcher C."/>
            <person name="Mungall K."/>
            <person name="Brooks K."/>
            <person name="Chillingworth T."/>
            <person name="Feltwell T."/>
            <person name="Abdellah Z."/>
            <person name="Hauser H."/>
            <person name="Jagels K."/>
            <person name="Maddison M."/>
            <person name="Moule S."/>
            <person name="Sanders M."/>
            <person name="Whitehead S."/>
            <person name="Quail M.A."/>
            <person name="Dougan G."/>
            <person name="Parkhill J."/>
            <person name="Prentice M.B."/>
        </authorList>
    </citation>
    <scope>NUCLEOTIDE SEQUENCE [LARGE SCALE GENOMIC DNA]</scope>
    <source>
        <strain>NCTC 13174 / 8081</strain>
    </source>
</reference>
<protein>
    <recommendedName>
        <fullName evidence="1">ATP synthase epsilon chain</fullName>
    </recommendedName>
    <alternativeName>
        <fullName evidence="1">ATP synthase F1 sector epsilon subunit</fullName>
    </alternativeName>
    <alternativeName>
        <fullName evidence="1">F-ATPase epsilon subunit</fullName>
    </alternativeName>
</protein>
<dbReference type="EMBL" id="AM286415">
    <property type="protein sequence ID" value="CAL14219.1"/>
    <property type="molecule type" value="Genomic_DNA"/>
</dbReference>
<dbReference type="RefSeq" id="WP_005175169.1">
    <property type="nucleotide sequence ID" value="NC_008800.1"/>
</dbReference>
<dbReference type="RefSeq" id="YP_001008337.1">
    <property type="nucleotide sequence ID" value="NC_008800.1"/>
</dbReference>
<dbReference type="SMR" id="A1JTC5"/>
<dbReference type="KEGG" id="yen:YE4205"/>
<dbReference type="PATRIC" id="fig|393305.7.peg.4471"/>
<dbReference type="eggNOG" id="COG0355">
    <property type="taxonomic scope" value="Bacteria"/>
</dbReference>
<dbReference type="HOGENOM" id="CLU_084338_2_0_6"/>
<dbReference type="OrthoDB" id="9791445at2"/>
<dbReference type="Proteomes" id="UP000000642">
    <property type="component" value="Chromosome"/>
</dbReference>
<dbReference type="GO" id="GO:0005886">
    <property type="term" value="C:plasma membrane"/>
    <property type="evidence" value="ECO:0007669"/>
    <property type="project" value="UniProtKB-SubCell"/>
</dbReference>
<dbReference type="GO" id="GO:0045259">
    <property type="term" value="C:proton-transporting ATP synthase complex"/>
    <property type="evidence" value="ECO:0007669"/>
    <property type="project" value="UniProtKB-KW"/>
</dbReference>
<dbReference type="GO" id="GO:0005524">
    <property type="term" value="F:ATP binding"/>
    <property type="evidence" value="ECO:0007669"/>
    <property type="project" value="UniProtKB-UniRule"/>
</dbReference>
<dbReference type="GO" id="GO:0046933">
    <property type="term" value="F:proton-transporting ATP synthase activity, rotational mechanism"/>
    <property type="evidence" value="ECO:0007669"/>
    <property type="project" value="UniProtKB-UniRule"/>
</dbReference>
<dbReference type="CDD" id="cd12152">
    <property type="entry name" value="F1-ATPase_delta"/>
    <property type="match status" value="1"/>
</dbReference>
<dbReference type="FunFam" id="1.20.5.440:FF:000001">
    <property type="entry name" value="ATP synthase epsilon chain"/>
    <property type="match status" value="1"/>
</dbReference>
<dbReference type="FunFam" id="2.60.15.10:FF:000001">
    <property type="entry name" value="ATP synthase epsilon chain"/>
    <property type="match status" value="1"/>
</dbReference>
<dbReference type="Gene3D" id="1.20.5.440">
    <property type="entry name" value="ATP synthase delta/epsilon subunit, C-terminal domain"/>
    <property type="match status" value="1"/>
</dbReference>
<dbReference type="Gene3D" id="2.60.15.10">
    <property type="entry name" value="F0F1 ATP synthase delta/epsilon subunit, N-terminal"/>
    <property type="match status" value="1"/>
</dbReference>
<dbReference type="HAMAP" id="MF_00530">
    <property type="entry name" value="ATP_synth_epsil_bac"/>
    <property type="match status" value="1"/>
</dbReference>
<dbReference type="InterPro" id="IPR036794">
    <property type="entry name" value="ATP_F1_dsu/esu_C_sf"/>
</dbReference>
<dbReference type="InterPro" id="IPR001469">
    <property type="entry name" value="ATP_synth_F1_dsu/esu"/>
</dbReference>
<dbReference type="InterPro" id="IPR020546">
    <property type="entry name" value="ATP_synth_F1_dsu/esu_N"/>
</dbReference>
<dbReference type="InterPro" id="IPR020547">
    <property type="entry name" value="ATP_synth_F1_esu_C"/>
</dbReference>
<dbReference type="InterPro" id="IPR036771">
    <property type="entry name" value="ATPsynth_dsu/esu_N"/>
</dbReference>
<dbReference type="NCBIfam" id="TIGR01216">
    <property type="entry name" value="ATP_synt_epsi"/>
    <property type="match status" value="1"/>
</dbReference>
<dbReference type="NCBIfam" id="NF001847">
    <property type="entry name" value="PRK00571.1-4"/>
    <property type="match status" value="1"/>
</dbReference>
<dbReference type="PANTHER" id="PTHR13822">
    <property type="entry name" value="ATP SYNTHASE DELTA/EPSILON CHAIN"/>
    <property type="match status" value="1"/>
</dbReference>
<dbReference type="PANTHER" id="PTHR13822:SF10">
    <property type="entry name" value="ATP SYNTHASE EPSILON CHAIN, CHLOROPLASTIC"/>
    <property type="match status" value="1"/>
</dbReference>
<dbReference type="Pfam" id="PF00401">
    <property type="entry name" value="ATP-synt_DE"/>
    <property type="match status" value="1"/>
</dbReference>
<dbReference type="Pfam" id="PF02823">
    <property type="entry name" value="ATP-synt_DE_N"/>
    <property type="match status" value="1"/>
</dbReference>
<dbReference type="SUPFAM" id="SSF46604">
    <property type="entry name" value="Epsilon subunit of F1F0-ATP synthase C-terminal domain"/>
    <property type="match status" value="1"/>
</dbReference>
<dbReference type="SUPFAM" id="SSF51344">
    <property type="entry name" value="Epsilon subunit of F1F0-ATP synthase N-terminal domain"/>
    <property type="match status" value="1"/>
</dbReference>
<comment type="function">
    <text evidence="1">Produces ATP from ADP in the presence of a proton gradient across the membrane.</text>
</comment>
<comment type="subunit">
    <text evidence="1">F-type ATPases have 2 components, CF(1) - the catalytic core - and CF(0) - the membrane proton channel. CF(1) has five subunits: alpha(3), beta(3), gamma(1), delta(1), epsilon(1). CF(0) has three main subunits: a, b and c.</text>
</comment>
<comment type="subcellular location">
    <subcellularLocation>
        <location evidence="1">Cell inner membrane</location>
        <topology evidence="1">Peripheral membrane protein</topology>
    </subcellularLocation>
</comment>
<comment type="similarity">
    <text evidence="1">Belongs to the ATPase epsilon chain family.</text>
</comment>
<keyword id="KW-0066">ATP synthesis</keyword>
<keyword id="KW-0997">Cell inner membrane</keyword>
<keyword id="KW-1003">Cell membrane</keyword>
<keyword id="KW-0139">CF(1)</keyword>
<keyword id="KW-0375">Hydrogen ion transport</keyword>
<keyword id="KW-0406">Ion transport</keyword>
<keyword id="KW-0472">Membrane</keyword>
<keyword id="KW-0813">Transport</keyword>